<feature type="chain" id="PRO_1000008359" description="Translation initiation factor IF-2">
    <location>
        <begin position="1"/>
        <end position="962"/>
    </location>
</feature>
<feature type="domain" description="tr-type G">
    <location>
        <begin position="455"/>
        <end position="624"/>
    </location>
</feature>
<feature type="region of interest" description="Disordered" evidence="3">
    <location>
        <begin position="122"/>
        <end position="263"/>
    </location>
</feature>
<feature type="region of interest" description="Disordered" evidence="3">
    <location>
        <begin position="293"/>
        <end position="327"/>
    </location>
</feature>
<feature type="region of interest" description="Disordered" evidence="3">
    <location>
        <begin position="341"/>
        <end position="362"/>
    </location>
</feature>
<feature type="region of interest" description="G1" evidence="1">
    <location>
        <begin position="464"/>
        <end position="471"/>
    </location>
</feature>
<feature type="region of interest" description="G2" evidence="1">
    <location>
        <begin position="489"/>
        <end position="493"/>
    </location>
</feature>
<feature type="region of interest" description="G3" evidence="1">
    <location>
        <begin position="510"/>
        <end position="513"/>
    </location>
</feature>
<feature type="region of interest" description="G4" evidence="1">
    <location>
        <begin position="564"/>
        <end position="567"/>
    </location>
</feature>
<feature type="region of interest" description="G5" evidence="1">
    <location>
        <begin position="600"/>
        <end position="602"/>
    </location>
</feature>
<feature type="compositionally biased region" description="Low complexity" evidence="3">
    <location>
        <begin position="156"/>
        <end position="173"/>
    </location>
</feature>
<feature type="compositionally biased region" description="Basic and acidic residues" evidence="3">
    <location>
        <begin position="188"/>
        <end position="202"/>
    </location>
</feature>
<feature type="compositionally biased region" description="Basic residues" evidence="3">
    <location>
        <begin position="244"/>
        <end position="256"/>
    </location>
</feature>
<feature type="compositionally biased region" description="Basic and acidic residues" evidence="3">
    <location>
        <begin position="308"/>
        <end position="327"/>
    </location>
</feature>
<feature type="compositionally biased region" description="Basic and acidic residues" evidence="3">
    <location>
        <begin position="344"/>
        <end position="362"/>
    </location>
</feature>
<feature type="binding site" evidence="2">
    <location>
        <begin position="464"/>
        <end position="471"/>
    </location>
    <ligand>
        <name>GTP</name>
        <dbReference type="ChEBI" id="CHEBI:37565"/>
    </ligand>
</feature>
<feature type="binding site" evidence="2">
    <location>
        <begin position="510"/>
        <end position="514"/>
    </location>
    <ligand>
        <name>GTP</name>
        <dbReference type="ChEBI" id="CHEBI:37565"/>
    </ligand>
</feature>
<feature type="binding site" evidence="2">
    <location>
        <begin position="564"/>
        <end position="567"/>
    </location>
    <ligand>
        <name>GTP</name>
        <dbReference type="ChEBI" id="CHEBI:37565"/>
    </ligand>
</feature>
<comment type="function">
    <text evidence="2">One of the essential components for the initiation of protein synthesis. Protects formylmethionyl-tRNA from spontaneous hydrolysis and promotes its binding to the 30S ribosomal subunits. Also involved in the hydrolysis of GTP during the formation of the 70S ribosomal complex.</text>
</comment>
<comment type="subcellular location">
    <subcellularLocation>
        <location evidence="2">Cytoplasm</location>
    </subcellularLocation>
</comment>
<comment type="similarity">
    <text evidence="2">Belongs to the TRAFAC class translation factor GTPase superfamily. Classic translation factor GTPase family. IF-2 subfamily.</text>
</comment>
<reference key="1">
    <citation type="submission" date="2006-10" db="EMBL/GenBank/DDBJ databases">
        <title>Complete sequence of Syntrophobacter fumaroxidans MPOB.</title>
        <authorList>
            <consortium name="US DOE Joint Genome Institute"/>
            <person name="Copeland A."/>
            <person name="Lucas S."/>
            <person name="Lapidus A."/>
            <person name="Barry K."/>
            <person name="Detter J.C."/>
            <person name="Glavina del Rio T."/>
            <person name="Hammon N."/>
            <person name="Israni S."/>
            <person name="Pitluck S."/>
            <person name="Goltsman E.G."/>
            <person name="Martinez M."/>
            <person name="Schmutz J."/>
            <person name="Larimer F."/>
            <person name="Land M."/>
            <person name="Hauser L."/>
            <person name="Kyrpides N."/>
            <person name="Kim E."/>
            <person name="Boone D.R."/>
            <person name="Brockman F."/>
            <person name="Culley D."/>
            <person name="Ferry J."/>
            <person name="Gunsalus R."/>
            <person name="McInerney M.J."/>
            <person name="Morrison M."/>
            <person name="Plugge C."/>
            <person name="Rohlin L."/>
            <person name="Scholten J."/>
            <person name="Sieber J."/>
            <person name="Stams A.J.M."/>
            <person name="Worm P."/>
            <person name="Henstra A.M."/>
            <person name="Richardson P."/>
        </authorList>
    </citation>
    <scope>NUCLEOTIDE SEQUENCE [LARGE SCALE GENOMIC DNA]</scope>
    <source>
        <strain>DSM 10017 / MPOB</strain>
    </source>
</reference>
<proteinExistence type="inferred from homology"/>
<keyword id="KW-0963">Cytoplasm</keyword>
<keyword id="KW-0342">GTP-binding</keyword>
<keyword id="KW-0396">Initiation factor</keyword>
<keyword id="KW-0547">Nucleotide-binding</keyword>
<keyword id="KW-0648">Protein biosynthesis</keyword>
<keyword id="KW-1185">Reference proteome</keyword>
<evidence type="ECO:0000250" key="1"/>
<evidence type="ECO:0000255" key="2">
    <source>
        <dbReference type="HAMAP-Rule" id="MF_00100"/>
    </source>
</evidence>
<evidence type="ECO:0000256" key="3">
    <source>
        <dbReference type="SAM" id="MobiDB-lite"/>
    </source>
</evidence>
<dbReference type="EMBL" id="CP000478">
    <property type="protein sequence ID" value="ABK16920.1"/>
    <property type="molecule type" value="Genomic_DNA"/>
</dbReference>
<dbReference type="RefSeq" id="WP_011698091.1">
    <property type="nucleotide sequence ID" value="NC_008554.1"/>
</dbReference>
<dbReference type="SMR" id="A0LHL8"/>
<dbReference type="FunCoup" id="A0LHL8">
    <property type="interactions" value="594"/>
</dbReference>
<dbReference type="STRING" id="335543.Sfum_1228"/>
<dbReference type="KEGG" id="sfu:Sfum_1228"/>
<dbReference type="eggNOG" id="COG0532">
    <property type="taxonomic scope" value="Bacteria"/>
</dbReference>
<dbReference type="eggNOG" id="COG3266">
    <property type="taxonomic scope" value="Bacteria"/>
</dbReference>
<dbReference type="HOGENOM" id="CLU_006301_5_1_7"/>
<dbReference type="InParanoid" id="A0LHL8"/>
<dbReference type="OrthoDB" id="9811804at2"/>
<dbReference type="Proteomes" id="UP000001784">
    <property type="component" value="Chromosome"/>
</dbReference>
<dbReference type="GO" id="GO:0005829">
    <property type="term" value="C:cytosol"/>
    <property type="evidence" value="ECO:0007669"/>
    <property type="project" value="TreeGrafter"/>
</dbReference>
<dbReference type="GO" id="GO:0005525">
    <property type="term" value="F:GTP binding"/>
    <property type="evidence" value="ECO:0007669"/>
    <property type="project" value="UniProtKB-KW"/>
</dbReference>
<dbReference type="GO" id="GO:0003924">
    <property type="term" value="F:GTPase activity"/>
    <property type="evidence" value="ECO:0007669"/>
    <property type="project" value="UniProtKB-UniRule"/>
</dbReference>
<dbReference type="GO" id="GO:0003743">
    <property type="term" value="F:translation initiation factor activity"/>
    <property type="evidence" value="ECO:0007669"/>
    <property type="project" value="UniProtKB-UniRule"/>
</dbReference>
<dbReference type="CDD" id="cd01887">
    <property type="entry name" value="IF2_eIF5B"/>
    <property type="match status" value="1"/>
</dbReference>
<dbReference type="CDD" id="cd03702">
    <property type="entry name" value="IF2_mtIF2_II"/>
    <property type="match status" value="1"/>
</dbReference>
<dbReference type="CDD" id="cd03692">
    <property type="entry name" value="mtIF2_IVc"/>
    <property type="match status" value="1"/>
</dbReference>
<dbReference type="FunFam" id="2.40.30.10:FF:000007">
    <property type="entry name" value="Translation initiation factor IF-2"/>
    <property type="match status" value="1"/>
</dbReference>
<dbReference type="FunFam" id="2.40.30.10:FF:000008">
    <property type="entry name" value="Translation initiation factor IF-2"/>
    <property type="match status" value="1"/>
</dbReference>
<dbReference type="FunFam" id="3.40.50.10050:FF:000001">
    <property type="entry name" value="Translation initiation factor IF-2"/>
    <property type="match status" value="1"/>
</dbReference>
<dbReference type="FunFam" id="3.40.50.300:FF:000019">
    <property type="entry name" value="Translation initiation factor IF-2"/>
    <property type="match status" value="1"/>
</dbReference>
<dbReference type="Gene3D" id="1.10.10.2480">
    <property type="match status" value="1"/>
</dbReference>
<dbReference type="Gene3D" id="3.40.50.300">
    <property type="entry name" value="P-loop containing nucleotide triphosphate hydrolases"/>
    <property type="match status" value="1"/>
</dbReference>
<dbReference type="Gene3D" id="2.40.30.10">
    <property type="entry name" value="Translation factors"/>
    <property type="match status" value="2"/>
</dbReference>
<dbReference type="Gene3D" id="3.40.50.10050">
    <property type="entry name" value="Translation initiation factor IF- 2, domain 3"/>
    <property type="match status" value="1"/>
</dbReference>
<dbReference type="HAMAP" id="MF_00100_B">
    <property type="entry name" value="IF_2_B"/>
    <property type="match status" value="1"/>
</dbReference>
<dbReference type="InterPro" id="IPR053905">
    <property type="entry name" value="EF-G-like_DII"/>
</dbReference>
<dbReference type="InterPro" id="IPR004161">
    <property type="entry name" value="EFTu-like_2"/>
</dbReference>
<dbReference type="InterPro" id="IPR044145">
    <property type="entry name" value="IF2_II"/>
</dbReference>
<dbReference type="InterPro" id="IPR006847">
    <property type="entry name" value="IF2_N"/>
</dbReference>
<dbReference type="InterPro" id="IPR027417">
    <property type="entry name" value="P-loop_NTPase"/>
</dbReference>
<dbReference type="InterPro" id="IPR005225">
    <property type="entry name" value="Small_GTP-bd"/>
</dbReference>
<dbReference type="InterPro" id="IPR000795">
    <property type="entry name" value="T_Tr_GTP-bd_dom"/>
</dbReference>
<dbReference type="InterPro" id="IPR000178">
    <property type="entry name" value="TF_IF2_bacterial-like"/>
</dbReference>
<dbReference type="InterPro" id="IPR015760">
    <property type="entry name" value="TIF_IF2"/>
</dbReference>
<dbReference type="InterPro" id="IPR023115">
    <property type="entry name" value="TIF_IF2_dom3"/>
</dbReference>
<dbReference type="InterPro" id="IPR036925">
    <property type="entry name" value="TIF_IF2_dom3_sf"/>
</dbReference>
<dbReference type="InterPro" id="IPR009000">
    <property type="entry name" value="Transl_B-barrel_sf"/>
</dbReference>
<dbReference type="NCBIfam" id="TIGR00487">
    <property type="entry name" value="IF-2"/>
    <property type="match status" value="1"/>
</dbReference>
<dbReference type="NCBIfam" id="TIGR00231">
    <property type="entry name" value="small_GTP"/>
    <property type="match status" value="1"/>
</dbReference>
<dbReference type="PANTHER" id="PTHR43381:SF5">
    <property type="entry name" value="TR-TYPE G DOMAIN-CONTAINING PROTEIN"/>
    <property type="match status" value="1"/>
</dbReference>
<dbReference type="PANTHER" id="PTHR43381">
    <property type="entry name" value="TRANSLATION INITIATION FACTOR IF-2-RELATED"/>
    <property type="match status" value="1"/>
</dbReference>
<dbReference type="Pfam" id="PF22042">
    <property type="entry name" value="EF-G_D2"/>
    <property type="match status" value="1"/>
</dbReference>
<dbReference type="Pfam" id="PF00009">
    <property type="entry name" value="GTP_EFTU"/>
    <property type="match status" value="1"/>
</dbReference>
<dbReference type="Pfam" id="PF03144">
    <property type="entry name" value="GTP_EFTU_D2"/>
    <property type="match status" value="1"/>
</dbReference>
<dbReference type="Pfam" id="PF11987">
    <property type="entry name" value="IF-2"/>
    <property type="match status" value="1"/>
</dbReference>
<dbReference type="Pfam" id="PF04760">
    <property type="entry name" value="IF2_N"/>
    <property type="match status" value="2"/>
</dbReference>
<dbReference type="SUPFAM" id="SSF52156">
    <property type="entry name" value="Initiation factor IF2/eIF5b, domain 3"/>
    <property type="match status" value="1"/>
</dbReference>
<dbReference type="SUPFAM" id="SSF52540">
    <property type="entry name" value="P-loop containing nucleoside triphosphate hydrolases"/>
    <property type="match status" value="1"/>
</dbReference>
<dbReference type="SUPFAM" id="SSF50447">
    <property type="entry name" value="Translation proteins"/>
    <property type="match status" value="2"/>
</dbReference>
<dbReference type="PROSITE" id="PS51722">
    <property type="entry name" value="G_TR_2"/>
    <property type="match status" value="1"/>
</dbReference>
<dbReference type="PROSITE" id="PS01176">
    <property type="entry name" value="IF2"/>
    <property type="match status" value="1"/>
</dbReference>
<protein>
    <recommendedName>
        <fullName evidence="2">Translation initiation factor IF-2</fullName>
    </recommendedName>
</protein>
<name>IF2_SYNFM</name>
<organism>
    <name type="scientific">Syntrophobacter fumaroxidans (strain DSM 10017 / MPOB)</name>
    <dbReference type="NCBI Taxonomy" id="335543"/>
    <lineage>
        <taxon>Bacteria</taxon>
        <taxon>Pseudomonadati</taxon>
        <taxon>Thermodesulfobacteriota</taxon>
        <taxon>Syntrophobacteria</taxon>
        <taxon>Syntrophobacterales</taxon>
        <taxon>Syntrophobacteraceae</taxon>
        <taxon>Syntrophobacter</taxon>
    </lineage>
</organism>
<gene>
    <name evidence="2" type="primary">infB</name>
    <name type="ordered locus">Sfum_1228</name>
</gene>
<sequence>MTRMRVHELAKELNMDNKDLIDRILKLGIQVKNHMSTLTDSAVLKIRQQFSEAKTETVEEKRIGRAVIRRRKKLTEGESAAAPAEGEERVASEALPVEAEMPAQPVEAPELIAEPISKLPPEVGVAQPQLPEEPEPAPEPLIPAVKPEEAAASELAVEPQTVVPPVAAPAAEVKPARPPMEAPAPARKPPEEKETKVKHAEPESLAEPLPSPAPVELTLVPAESAAGQVAERTDEEEEEDDKARPKKAKKRRRKKVRKDEPARIIKLPEIIPEEPEEEAVLPAHLATRIQVKTEEVEVKEAPRKKRPRPEEFEKEAAERKAKGTRRKEVFEREDLYSKQEIAAQDDRGRLKGDKRRPFAKEPARPEIAVVKPGKRKIRVDEAITVANLAKQMGIKATELIKKLLLLGLPANINQAVDFDTAALLASEFEFEVEKTGFEEEELLQVREDRVEDLIRRPPVITVMGHVDHGKTSLLDAIRDTNVIGGEAGGITQHIGAYYVMLPNGNVVFLDTPGHEAFTSMRARGAKVTDIVILVVAADDGVMQQTIEAINHAKAAEVPIIVAINKVDKPNANIDRVKRELAEHGLIPEEWGGNVTMVGISAKKRTGIEELLEMVLLQAELLELKANPAKPARGRVIEAKLDKGRGPVATILIQEGTLRTGDVYLCGVNSGRVRNMFSDRGQRLDEAGPSMPVEVLGLSGVPNAGDDFITLPDERQAKMIAEHRLVKLREKELSRTSKVTLESLFEQIQEGEIKELNLILKADVHGSLEAITDSLLKLSTPEVKVSLIHFGTGAVIETDVMLASASNAIVIGFNVRSETKVQELADQENVDVRYYDVIYQLLSDVKDAMVGMLEPVFKENVIGRAEVRQTFQVPKIGMIAGSFVLEGRVERNAKCRVLRDHVVTYDGKISSLRRFKDDAKEVKAGFECGIGVENFNDIKVGDILEVYELQEMKPVLESPPGDK</sequence>
<accession>A0LHL8</accession>